<accession>Q160Y2</accession>
<protein>
    <recommendedName>
        <fullName evidence="1">Small ribosomal subunit protein uS7</fullName>
    </recommendedName>
    <alternativeName>
        <fullName evidence="2">30S ribosomal protein S7</fullName>
    </alternativeName>
</protein>
<evidence type="ECO:0000255" key="1">
    <source>
        <dbReference type="HAMAP-Rule" id="MF_00480"/>
    </source>
</evidence>
<evidence type="ECO:0000305" key="2"/>
<keyword id="KW-1185">Reference proteome</keyword>
<keyword id="KW-0687">Ribonucleoprotein</keyword>
<keyword id="KW-0689">Ribosomal protein</keyword>
<keyword id="KW-0694">RNA-binding</keyword>
<keyword id="KW-0699">rRNA-binding</keyword>
<keyword id="KW-0820">tRNA-binding</keyword>
<reference key="1">
    <citation type="journal article" date="2007" name="J. Bacteriol.">
        <title>The complete genome sequence of Roseobacter denitrificans reveals a mixotrophic rather than photosynthetic metabolism.</title>
        <authorList>
            <person name="Swingley W.D."/>
            <person name="Sadekar S."/>
            <person name="Mastrian S.D."/>
            <person name="Matthies H.J."/>
            <person name="Hao J."/>
            <person name="Ramos H."/>
            <person name="Acharya C.R."/>
            <person name="Conrad A.L."/>
            <person name="Taylor H.L."/>
            <person name="Dejesa L.C."/>
            <person name="Shah M.K."/>
            <person name="O'Huallachain M.E."/>
            <person name="Lince M.T."/>
            <person name="Blankenship R.E."/>
            <person name="Beatty J.T."/>
            <person name="Touchman J.W."/>
        </authorList>
    </citation>
    <scope>NUCLEOTIDE SEQUENCE [LARGE SCALE GENOMIC DNA]</scope>
    <source>
        <strain>ATCC 33942 / OCh 114</strain>
    </source>
</reference>
<gene>
    <name evidence="1" type="primary">rpsG</name>
    <name type="ordered locus">RD1_4014</name>
</gene>
<comment type="function">
    <text evidence="1">One of the primary rRNA binding proteins, it binds directly to 16S rRNA where it nucleates assembly of the head domain of the 30S subunit. Is located at the subunit interface close to the decoding center, probably blocks exit of the E-site tRNA.</text>
</comment>
<comment type="subunit">
    <text evidence="1">Part of the 30S ribosomal subunit. Contacts proteins S9 and S11.</text>
</comment>
<comment type="similarity">
    <text evidence="1">Belongs to the universal ribosomal protein uS7 family.</text>
</comment>
<feature type="chain" id="PRO_1000014277" description="Small ribosomal subunit protein uS7">
    <location>
        <begin position="1"/>
        <end position="156"/>
    </location>
</feature>
<organism>
    <name type="scientific">Roseobacter denitrificans (strain ATCC 33942 / OCh 114)</name>
    <name type="common">Erythrobacter sp. (strain OCh 114)</name>
    <name type="synonym">Roseobacter denitrificans</name>
    <dbReference type="NCBI Taxonomy" id="375451"/>
    <lineage>
        <taxon>Bacteria</taxon>
        <taxon>Pseudomonadati</taxon>
        <taxon>Pseudomonadota</taxon>
        <taxon>Alphaproteobacteria</taxon>
        <taxon>Rhodobacterales</taxon>
        <taxon>Roseobacteraceae</taxon>
        <taxon>Roseobacter</taxon>
    </lineage>
</organism>
<name>RS7_ROSDO</name>
<sequence length="156" mass="17914">MSRRHAAEKREVLPDAKYGDLVLTKFMNNLMIDGKKSVAETIVYNALTRVETKIKRAPIEVFHEALDNIQPSVEVRSRRVGGATYQVPVEVRPERRQALAIRWLIKAARSRNENTMEERLAGELLDAVQSRGTAVKKREDTHKMADANKAFSHYRW</sequence>
<dbReference type="EMBL" id="CP000362">
    <property type="protein sequence ID" value="ABG33461.1"/>
    <property type="molecule type" value="Genomic_DNA"/>
</dbReference>
<dbReference type="RefSeq" id="WP_011570071.1">
    <property type="nucleotide sequence ID" value="NC_008209.1"/>
</dbReference>
<dbReference type="SMR" id="Q160Y2"/>
<dbReference type="STRING" id="375451.RD1_4014"/>
<dbReference type="KEGG" id="rde:RD1_4014"/>
<dbReference type="eggNOG" id="COG0049">
    <property type="taxonomic scope" value="Bacteria"/>
</dbReference>
<dbReference type="HOGENOM" id="CLU_072226_1_1_5"/>
<dbReference type="OrthoDB" id="9807653at2"/>
<dbReference type="Proteomes" id="UP000007029">
    <property type="component" value="Chromosome"/>
</dbReference>
<dbReference type="GO" id="GO:0015935">
    <property type="term" value="C:small ribosomal subunit"/>
    <property type="evidence" value="ECO:0007669"/>
    <property type="project" value="InterPro"/>
</dbReference>
<dbReference type="GO" id="GO:0019843">
    <property type="term" value="F:rRNA binding"/>
    <property type="evidence" value="ECO:0007669"/>
    <property type="project" value="UniProtKB-UniRule"/>
</dbReference>
<dbReference type="GO" id="GO:0003735">
    <property type="term" value="F:structural constituent of ribosome"/>
    <property type="evidence" value="ECO:0007669"/>
    <property type="project" value="InterPro"/>
</dbReference>
<dbReference type="GO" id="GO:0000049">
    <property type="term" value="F:tRNA binding"/>
    <property type="evidence" value="ECO:0007669"/>
    <property type="project" value="UniProtKB-UniRule"/>
</dbReference>
<dbReference type="GO" id="GO:0006412">
    <property type="term" value="P:translation"/>
    <property type="evidence" value="ECO:0007669"/>
    <property type="project" value="UniProtKB-UniRule"/>
</dbReference>
<dbReference type="CDD" id="cd14869">
    <property type="entry name" value="uS7_Bacteria"/>
    <property type="match status" value="1"/>
</dbReference>
<dbReference type="FunFam" id="1.10.455.10:FF:000001">
    <property type="entry name" value="30S ribosomal protein S7"/>
    <property type="match status" value="1"/>
</dbReference>
<dbReference type="Gene3D" id="1.10.455.10">
    <property type="entry name" value="Ribosomal protein S7 domain"/>
    <property type="match status" value="1"/>
</dbReference>
<dbReference type="HAMAP" id="MF_00480_B">
    <property type="entry name" value="Ribosomal_uS7_B"/>
    <property type="match status" value="1"/>
</dbReference>
<dbReference type="InterPro" id="IPR000235">
    <property type="entry name" value="Ribosomal_uS7"/>
</dbReference>
<dbReference type="InterPro" id="IPR005717">
    <property type="entry name" value="Ribosomal_uS7_bac/org-type"/>
</dbReference>
<dbReference type="InterPro" id="IPR020606">
    <property type="entry name" value="Ribosomal_uS7_CS"/>
</dbReference>
<dbReference type="InterPro" id="IPR023798">
    <property type="entry name" value="Ribosomal_uS7_dom"/>
</dbReference>
<dbReference type="InterPro" id="IPR036823">
    <property type="entry name" value="Ribosomal_uS7_dom_sf"/>
</dbReference>
<dbReference type="NCBIfam" id="TIGR01029">
    <property type="entry name" value="rpsG_bact"/>
    <property type="match status" value="1"/>
</dbReference>
<dbReference type="PANTHER" id="PTHR11205">
    <property type="entry name" value="RIBOSOMAL PROTEIN S7"/>
    <property type="match status" value="1"/>
</dbReference>
<dbReference type="Pfam" id="PF00177">
    <property type="entry name" value="Ribosomal_S7"/>
    <property type="match status" value="1"/>
</dbReference>
<dbReference type="PIRSF" id="PIRSF002122">
    <property type="entry name" value="RPS7p_RPS7a_RPS5e_RPS7o"/>
    <property type="match status" value="1"/>
</dbReference>
<dbReference type="SUPFAM" id="SSF47973">
    <property type="entry name" value="Ribosomal protein S7"/>
    <property type="match status" value="1"/>
</dbReference>
<dbReference type="PROSITE" id="PS00052">
    <property type="entry name" value="RIBOSOMAL_S7"/>
    <property type="match status" value="1"/>
</dbReference>
<proteinExistence type="inferred from homology"/>